<protein>
    <recommendedName>
        <fullName evidence="1">Transcriptional repressor NrdR</fullName>
    </recommendedName>
</protein>
<feature type="chain" id="PRO_0000182289" description="Transcriptional repressor NrdR">
    <location>
        <begin position="1"/>
        <end position="156"/>
    </location>
</feature>
<feature type="domain" description="ATP-cone" evidence="1">
    <location>
        <begin position="46"/>
        <end position="136"/>
    </location>
</feature>
<feature type="zinc finger region" evidence="1">
    <location>
        <begin position="3"/>
        <end position="34"/>
    </location>
</feature>
<proteinExistence type="inferred from homology"/>
<name>NRDR_COREF</name>
<evidence type="ECO:0000255" key="1">
    <source>
        <dbReference type="HAMAP-Rule" id="MF_00440"/>
    </source>
</evidence>
<evidence type="ECO:0000305" key="2"/>
<organism>
    <name type="scientific">Corynebacterium efficiens (strain DSM 44549 / YS-314 / AJ 12310 / JCM 11189 / NBRC 100395)</name>
    <dbReference type="NCBI Taxonomy" id="196164"/>
    <lineage>
        <taxon>Bacteria</taxon>
        <taxon>Bacillati</taxon>
        <taxon>Actinomycetota</taxon>
        <taxon>Actinomycetes</taxon>
        <taxon>Mycobacteriales</taxon>
        <taxon>Corynebacteriaceae</taxon>
        <taxon>Corynebacterium</taxon>
    </lineage>
</organism>
<dbReference type="EMBL" id="BA000035">
    <property type="protein sequence ID" value="BAC18630.1"/>
    <property type="status" value="ALT_INIT"/>
    <property type="molecule type" value="Genomic_DNA"/>
</dbReference>
<dbReference type="RefSeq" id="WP_011075624.1">
    <property type="nucleotide sequence ID" value="NC_004369.1"/>
</dbReference>
<dbReference type="SMR" id="Q8FPF8"/>
<dbReference type="STRING" id="196164.gene:10742248"/>
<dbReference type="KEGG" id="cef:CE1820"/>
<dbReference type="eggNOG" id="COG1327">
    <property type="taxonomic scope" value="Bacteria"/>
</dbReference>
<dbReference type="HOGENOM" id="CLU_108412_1_0_11"/>
<dbReference type="OrthoDB" id="9807461at2"/>
<dbReference type="Proteomes" id="UP000001409">
    <property type="component" value="Chromosome"/>
</dbReference>
<dbReference type="GO" id="GO:0005524">
    <property type="term" value="F:ATP binding"/>
    <property type="evidence" value="ECO:0007669"/>
    <property type="project" value="UniProtKB-KW"/>
</dbReference>
<dbReference type="GO" id="GO:0003677">
    <property type="term" value="F:DNA binding"/>
    <property type="evidence" value="ECO:0007669"/>
    <property type="project" value="UniProtKB-KW"/>
</dbReference>
<dbReference type="GO" id="GO:0008270">
    <property type="term" value="F:zinc ion binding"/>
    <property type="evidence" value="ECO:0007669"/>
    <property type="project" value="UniProtKB-UniRule"/>
</dbReference>
<dbReference type="GO" id="GO:0045892">
    <property type="term" value="P:negative regulation of DNA-templated transcription"/>
    <property type="evidence" value="ECO:0007669"/>
    <property type="project" value="UniProtKB-UniRule"/>
</dbReference>
<dbReference type="HAMAP" id="MF_00440">
    <property type="entry name" value="NrdR"/>
    <property type="match status" value="1"/>
</dbReference>
<dbReference type="InterPro" id="IPR005144">
    <property type="entry name" value="ATP-cone_dom"/>
</dbReference>
<dbReference type="InterPro" id="IPR055173">
    <property type="entry name" value="NrdR-like_N"/>
</dbReference>
<dbReference type="InterPro" id="IPR003796">
    <property type="entry name" value="RNR_NrdR-like"/>
</dbReference>
<dbReference type="NCBIfam" id="TIGR00244">
    <property type="entry name" value="transcriptional regulator NrdR"/>
    <property type="match status" value="1"/>
</dbReference>
<dbReference type="PANTHER" id="PTHR30455">
    <property type="entry name" value="TRANSCRIPTIONAL REPRESSOR NRDR"/>
    <property type="match status" value="1"/>
</dbReference>
<dbReference type="PANTHER" id="PTHR30455:SF2">
    <property type="entry name" value="TRANSCRIPTIONAL REPRESSOR NRDR"/>
    <property type="match status" value="1"/>
</dbReference>
<dbReference type="Pfam" id="PF03477">
    <property type="entry name" value="ATP-cone"/>
    <property type="match status" value="1"/>
</dbReference>
<dbReference type="Pfam" id="PF22811">
    <property type="entry name" value="Zn_ribbon_NrdR"/>
    <property type="match status" value="1"/>
</dbReference>
<dbReference type="PROSITE" id="PS51161">
    <property type="entry name" value="ATP_CONE"/>
    <property type="match status" value="1"/>
</dbReference>
<gene>
    <name evidence="1" type="primary">nrdR</name>
    <name type="ordered locus">CE1820</name>
</gene>
<comment type="function">
    <text evidence="1">Negatively regulates transcription of bacterial ribonucleotide reductase nrd genes and operons by binding to NrdR-boxes.</text>
</comment>
<comment type="cofactor">
    <cofactor evidence="1">
        <name>Zn(2+)</name>
        <dbReference type="ChEBI" id="CHEBI:29105"/>
    </cofactor>
    <text evidence="1">Binds 1 zinc ion.</text>
</comment>
<comment type="similarity">
    <text evidence="1">Belongs to the NrdR family.</text>
</comment>
<comment type="sequence caution" evidence="2">
    <conflict type="erroneous initiation">
        <sequence resource="EMBL-CDS" id="BAC18630"/>
    </conflict>
</comment>
<sequence length="156" mass="17823">MYCPFCQHGHSRVIDSRVIEAGSAIRRRRECSQCQGRFTTIEKAVLLVLKRNGVTEPFSREKVVTGVRRACQGRDVSDDSLKRLAQQVEETVRSSGSSQVRANDIGLAILDPLRELDEVAYLRFASVYKSFESADDFEKEIRLMRRQSREKQVQQG</sequence>
<keyword id="KW-0067">ATP-binding</keyword>
<keyword id="KW-0238">DNA-binding</keyword>
<keyword id="KW-0479">Metal-binding</keyword>
<keyword id="KW-0547">Nucleotide-binding</keyword>
<keyword id="KW-1185">Reference proteome</keyword>
<keyword id="KW-0678">Repressor</keyword>
<keyword id="KW-0804">Transcription</keyword>
<keyword id="KW-0805">Transcription regulation</keyword>
<keyword id="KW-0862">Zinc</keyword>
<keyword id="KW-0863">Zinc-finger</keyword>
<accession>Q8FPF8</accession>
<reference key="1">
    <citation type="journal article" date="2003" name="Genome Res.">
        <title>Comparative complete genome sequence analysis of the amino acid replacements responsible for the thermostability of Corynebacterium efficiens.</title>
        <authorList>
            <person name="Nishio Y."/>
            <person name="Nakamura Y."/>
            <person name="Kawarabayasi Y."/>
            <person name="Usuda Y."/>
            <person name="Kimura E."/>
            <person name="Sugimoto S."/>
            <person name="Matsui K."/>
            <person name="Yamagishi A."/>
            <person name="Kikuchi H."/>
            <person name="Ikeo K."/>
            <person name="Gojobori T."/>
        </authorList>
    </citation>
    <scope>NUCLEOTIDE SEQUENCE [LARGE SCALE GENOMIC DNA]</scope>
    <source>
        <strain>DSM 44549 / YS-314 / AJ 12310 / JCM 11189 / NBRC 100395</strain>
    </source>
</reference>